<organism>
    <name type="scientific">Escherichia coli (strain K12 / DH10B)</name>
    <dbReference type="NCBI Taxonomy" id="316385"/>
    <lineage>
        <taxon>Bacteria</taxon>
        <taxon>Pseudomonadati</taxon>
        <taxon>Pseudomonadota</taxon>
        <taxon>Gammaproteobacteria</taxon>
        <taxon>Enterobacterales</taxon>
        <taxon>Enterobacteriaceae</taxon>
        <taxon>Escherichia</taxon>
    </lineage>
</organism>
<accession>B1XDR5</accession>
<protein>
    <recommendedName>
        <fullName evidence="1">Small ribosomal subunit biogenesis GTPase RsgA</fullName>
        <ecNumber evidence="1">3.6.1.-</ecNumber>
    </recommendedName>
</protein>
<comment type="function">
    <text evidence="1">One of several proteins that assist in the late maturation steps of the functional core of the 30S ribosomal subunit. Helps release RbfA from mature subunits. May play a role in the assembly of ribosomal proteins into the subunit. Circularly permuted GTPase that catalyzes slow GTP hydrolysis, GTPase activity is stimulated by the 30S ribosomal subunit.</text>
</comment>
<comment type="cofactor">
    <cofactor evidence="1">
        <name>Zn(2+)</name>
        <dbReference type="ChEBI" id="CHEBI:29105"/>
    </cofactor>
    <text evidence="1">Binds 1 zinc ion per subunit.</text>
</comment>
<comment type="subunit">
    <text evidence="1">Monomer. Associates with 30S ribosomal subunit, binds 16S rRNA.</text>
</comment>
<comment type="subcellular location">
    <subcellularLocation>
        <location evidence="1">Cytoplasm</location>
    </subcellularLocation>
</comment>
<comment type="similarity">
    <text evidence="1">Belongs to the TRAFAC class YlqF/YawG GTPase family. RsgA subfamily.</text>
</comment>
<name>RSGA_ECODH</name>
<keyword id="KW-0963">Cytoplasm</keyword>
<keyword id="KW-0342">GTP-binding</keyword>
<keyword id="KW-0378">Hydrolase</keyword>
<keyword id="KW-0479">Metal-binding</keyword>
<keyword id="KW-0547">Nucleotide-binding</keyword>
<keyword id="KW-0690">Ribosome biogenesis</keyword>
<keyword id="KW-0694">RNA-binding</keyword>
<keyword id="KW-0699">rRNA-binding</keyword>
<keyword id="KW-0862">Zinc</keyword>
<gene>
    <name evidence="1" type="primary">rsgA</name>
    <name type="ordered locus">ECDH10B_4356</name>
</gene>
<sequence length="350" mass="39193">MSKNKLSKGQQRRVNANHQRRLKTSKEKPDYDDNLFGEPDEGIVISRFGMHADVESADGDVHRCNIRRTIRSLVTGDRVVWRPGKPAAEGVNVKGIVEAVHERTSVLTRPDFYDGVKPIAANIDQIVIVSAILPELSLNIIDRYLVACETLQIEPIIVLNKIDLLDDEGMAFVNEQMDIYRNIGYRVLMVSSHTQDGLKPLEEALTGRISIFAGQSGVGKSSLLNALLGLQKEILTNDISDNSGLGQHTTTAARLYHFPHGGDVIDSPGVREFGLWHLEPEQITQGFVEFHDYLGLCKYRDCKHDTDPGCAIREAVEEGKIAETRFENYHRILESMAQVKTRKNFSDTDD</sequence>
<dbReference type="EC" id="3.6.1.-" evidence="1"/>
<dbReference type="EMBL" id="CP000948">
    <property type="protein sequence ID" value="ACB05152.1"/>
    <property type="molecule type" value="Genomic_DNA"/>
</dbReference>
<dbReference type="RefSeq" id="WP_000041964.1">
    <property type="nucleotide sequence ID" value="NC_010473.1"/>
</dbReference>
<dbReference type="SMR" id="B1XDR5"/>
<dbReference type="KEGG" id="ecd:ECDH10B_4356"/>
<dbReference type="HOGENOM" id="CLU_033617_2_0_6"/>
<dbReference type="GO" id="GO:0005737">
    <property type="term" value="C:cytoplasm"/>
    <property type="evidence" value="ECO:0007669"/>
    <property type="project" value="UniProtKB-SubCell"/>
</dbReference>
<dbReference type="GO" id="GO:0005525">
    <property type="term" value="F:GTP binding"/>
    <property type="evidence" value="ECO:0007669"/>
    <property type="project" value="UniProtKB-UniRule"/>
</dbReference>
<dbReference type="GO" id="GO:0003924">
    <property type="term" value="F:GTPase activity"/>
    <property type="evidence" value="ECO:0007669"/>
    <property type="project" value="UniProtKB-UniRule"/>
</dbReference>
<dbReference type="GO" id="GO:0046872">
    <property type="term" value="F:metal ion binding"/>
    <property type="evidence" value="ECO:0007669"/>
    <property type="project" value="UniProtKB-KW"/>
</dbReference>
<dbReference type="GO" id="GO:0019843">
    <property type="term" value="F:rRNA binding"/>
    <property type="evidence" value="ECO:0007669"/>
    <property type="project" value="UniProtKB-KW"/>
</dbReference>
<dbReference type="GO" id="GO:0042274">
    <property type="term" value="P:ribosomal small subunit biogenesis"/>
    <property type="evidence" value="ECO:0007669"/>
    <property type="project" value="UniProtKB-UniRule"/>
</dbReference>
<dbReference type="CDD" id="cd01854">
    <property type="entry name" value="YjeQ_EngC"/>
    <property type="match status" value="1"/>
</dbReference>
<dbReference type="FunFam" id="1.10.40.50:FF:000001">
    <property type="entry name" value="Small ribosomal subunit biogenesis GTPase RsgA"/>
    <property type="match status" value="1"/>
</dbReference>
<dbReference type="FunFam" id="2.40.50.140:FF:000122">
    <property type="entry name" value="Small ribosomal subunit biogenesis GTPase RsgA"/>
    <property type="match status" value="1"/>
</dbReference>
<dbReference type="FunFam" id="3.40.50.300:FF:000389">
    <property type="entry name" value="Small ribosomal subunit biogenesis GTPase RsgA"/>
    <property type="match status" value="1"/>
</dbReference>
<dbReference type="Gene3D" id="2.40.50.140">
    <property type="entry name" value="Nucleic acid-binding proteins"/>
    <property type="match status" value="1"/>
</dbReference>
<dbReference type="Gene3D" id="3.40.50.300">
    <property type="entry name" value="P-loop containing nucleotide triphosphate hydrolases"/>
    <property type="match status" value="1"/>
</dbReference>
<dbReference type="Gene3D" id="1.10.40.50">
    <property type="entry name" value="Probable gtpase engc, domain 3"/>
    <property type="match status" value="1"/>
</dbReference>
<dbReference type="HAMAP" id="MF_01820">
    <property type="entry name" value="GTPase_RsgA"/>
    <property type="match status" value="1"/>
</dbReference>
<dbReference type="InterPro" id="IPR030378">
    <property type="entry name" value="G_CP_dom"/>
</dbReference>
<dbReference type="InterPro" id="IPR012340">
    <property type="entry name" value="NA-bd_OB-fold"/>
</dbReference>
<dbReference type="InterPro" id="IPR027417">
    <property type="entry name" value="P-loop_NTPase"/>
</dbReference>
<dbReference type="InterPro" id="IPR004881">
    <property type="entry name" value="Ribosome_biogen_GTPase_RsgA"/>
</dbReference>
<dbReference type="InterPro" id="IPR010914">
    <property type="entry name" value="RsgA_GTPase_dom"/>
</dbReference>
<dbReference type="NCBIfam" id="NF008931">
    <property type="entry name" value="PRK12288.1"/>
    <property type="match status" value="1"/>
</dbReference>
<dbReference type="NCBIfam" id="TIGR00157">
    <property type="entry name" value="ribosome small subunit-dependent GTPase A"/>
    <property type="match status" value="1"/>
</dbReference>
<dbReference type="PANTHER" id="PTHR32120">
    <property type="entry name" value="SMALL RIBOSOMAL SUBUNIT BIOGENESIS GTPASE RSGA"/>
    <property type="match status" value="1"/>
</dbReference>
<dbReference type="PANTHER" id="PTHR32120:SF11">
    <property type="entry name" value="SMALL RIBOSOMAL SUBUNIT BIOGENESIS GTPASE RSGA 1, MITOCHONDRIAL-RELATED"/>
    <property type="match status" value="1"/>
</dbReference>
<dbReference type="Pfam" id="PF03193">
    <property type="entry name" value="RsgA_GTPase"/>
    <property type="match status" value="1"/>
</dbReference>
<dbReference type="SUPFAM" id="SSF52540">
    <property type="entry name" value="P-loop containing nucleoside triphosphate hydrolases"/>
    <property type="match status" value="1"/>
</dbReference>
<dbReference type="PROSITE" id="PS50936">
    <property type="entry name" value="ENGC_GTPASE"/>
    <property type="match status" value="1"/>
</dbReference>
<dbReference type="PROSITE" id="PS51721">
    <property type="entry name" value="G_CP"/>
    <property type="match status" value="1"/>
</dbReference>
<proteinExistence type="inferred from homology"/>
<evidence type="ECO:0000255" key="1">
    <source>
        <dbReference type="HAMAP-Rule" id="MF_01820"/>
    </source>
</evidence>
<evidence type="ECO:0000255" key="2">
    <source>
        <dbReference type="PROSITE-ProRule" id="PRU01058"/>
    </source>
</evidence>
<evidence type="ECO:0000256" key="3">
    <source>
        <dbReference type="SAM" id="MobiDB-lite"/>
    </source>
</evidence>
<reference key="1">
    <citation type="journal article" date="2008" name="J. Bacteriol.">
        <title>The complete genome sequence of Escherichia coli DH10B: insights into the biology of a laboratory workhorse.</title>
        <authorList>
            <person name="Durfee T."/>
            <person name="Nelson R."/>
            <person name="Baldwin S."/>
            <person name="Plunkett G. III"/>
            <person name="Burland V."/>
            <person name="Mau B."/>
            <person name="Petrosino J.F."/>
            <person name="Qin X."/>
            <person name="Muzny D.M."/>
            <person name="Ayele M."/>
            <person name="Gibbs R.A."/>
            <person name="Csorgo B."/>
            <person name="Posfai G."/>
            <person name="Weinstock G.M."/>
            <person name="Blattner F.R."/>
        </authorList>
    </citation>
    <scope>NUCLEOTIDE SEQUENCE [LARGE SCALE GENOMIC DNA]</scope>
    <source>
        <strain>K12 / DH10B</strain>
    </source>
</reference>
<feature type="chain" id="PRO_1000188069" description="Small ribosomal subunit biogenesis GTPase RsgA">
    <location>
        <begin position="1"/>
        <end position="350"/>
    </location>
</feature>
<feature type="domain" description="CP-type G" evidence="2">
    <location>
        <begin position="104"/>
        <end position="273"/>
    </location>
</feature>
<feature type="region of interest" description="Disordered" evidence="3">
    <location>
        <begin position="1"/>
        <end position="33"/>
    </location>
</feature>
<feature type="compositionally biased region" description="Polar residues" evidence="3">
    <location>
        <begin position="1"/>
        <end position="17"/>
    </location>
</feature>
<feature type="binding site" evidence="1">
    <location>
        <begin position="160"/>
        <end position="163"/>
    </location>
    <ligand>
        <name>GTP</name>
        <dbReference type="ChEBI" id="CHEBI:37565"/>
    </ligand>
</feature>
<feature type="binding site" evidence="1">
    <location>
        <begin position="214"/>
        <end position="222"/>
    </location>
    <ligand>
        <name>GTP</name>
        <dbReference type="ChEBI" id="CHEBI:37565"/>
    </ligand>
</feature>
<feature type="binding site" evidence="1">
    <location>
        <position position="297"/>
    </location>
    <ligand>
        <name>Zn(2+)</name>
        <dbReference type="ChEBI" id="CHEBI:29105"/>
    </ligand>
</feature>
<feature type="binding site" evidence="1">
    <location>
        <position position="302"/>
    </location>
    <ligand>
        <name>Zn(2+)</name>
        <dbReference type="ChEBI" id="CHEBI:29105"/>
    </ligand>
</feature>
<feature type="binding site" evidence="1">
    <location>
        <position position="304"/>
    </location>
    <ligand>
        <name>Zn(2+)</name>
        <dbReference type="ChEBI" id="CHEBI:29105"/>
    </ligand>
</feature>
<feature type="binding site" evidence="1">
    <location>
        <position position="310"/>
    </location>
    <ligand>
        <name>Zn(2+)</name>
        <dbReference type="ChEBI" id="CHEBI:29105"/>
    </ligand>
</feature>